<comment type="function">
    <text evidence="1">Transcriptional regulator.</text>
</comment>
<comment type="cofactor">
    <cofactor evidence="1">
        <name>Ni(2+)</name>
        <dbReference type="ChEBI" id="CHEBI:49786"/>
    </cofactor>
    <text evidence="1">Binds 1 nickel ion per subunit.</text>
</comment>
<comment type="similarity">
    <text evidence="1">Belongs to the transcriptional regulatory CopG/NikR family.</text>
</comment>
<proteinExistence type="inferred from homology"/>
<protein>
    <recommendedName>
        <fullName evidence="1">Putative nickel-responsive regulator</fullName>
    </recommendedName>
</protein>
<evidence type="ECO:0000255" key="1">
    <source>
        <dbReference type="HAMAP-Rule" id="MF_00476"/>
    </source>
</evidence>
<name>NIKR_NITV4</name>
<keyword id="KW-0238">DNA-binding</keyword>
<keyword id="KW-0479">Metal-binding</keyword>
<keyword id="KW-0533">Nickel</keyword>
<keyword id="KW-0804">Transcription</keyword>
<keyword id="KW-0805">Transcription regulation</keyword>
<sequence length="139" mass="15916">MGRTIRFGVSLDSELLDKFDVLCDERCYQTRSEAIRDLIRNTLVQQEWEDTDREIAGTLTLVYDHHKSDLAQRLTEIQHDVHDIIITSLHVHLDHYNCLEVLVLKGPGQQVRNLAQRLISTKGVKHGKLSLTTTGQDLT</sequence>
<dbReference type="EMBL" id="CP000527">
    <property type="protein sequence ID" value="ABM27497.1"/>
    <property type="molecule type" value="Genomic_DNA"/>
</dbReference>
<dbReference type="SMR" id="A1VAN1"/>
<dbReference type="KEGG" id="dvl:Dvul_0474"/>
<dbReference type="HOGENOM" id="CLU_113319_1_2_7"/>
<dbReference type="Proteomes" id="UP000009173">
    <property type="component" value="Chromosome"/>
</dbReference>
<dbReference type="GO" id="GO:0003677">
    <property type="term" value="F:DNA binding"/>
    <property type="evidence" value="ECO:0007669"/>
    <property type="project" value="UniProtKB-KW"/>
</dbReference>
<dbReference type="GO" id="GO:0003700">
    <property type="term" value="F:DNA-binding transcription factor activity"/>
    <property type="evidence" value="ECO:0007669"/>
    <property type="project" value="UniProtKB-UniRule"/>
</dbReference>
<dbReference type="GO" id="GO:0016151">
    <property type="term" value="F:nickel cation binding"/>
    <property type="evidence" value="ECO:0007669"/>
    <property type="project" value="UniProtKB-UniRule"/>
</dbReference>
<dbReference type="GO" id="GO:0010045">
    <property type="term" value="P:response to nickel cation"/>
    <property type="evidence" value="ECO:0007669"/>
    <property type="project" value="InterPro"/>
</dbReference>
<dbReference type="CDD" id="cd22231">
    <property type="entry name" value="RHH_NikR_HicB-like"/>
    <property type="match status" value="1"/>
</dbReference>
<dbReference type="Gene3D" id="3.30.70.1150">
    <property type="entry name" value="ACT-like. Chain A, domain 2"/>
    <property type="match status" value="1"/>
</dbReference>
<dbReference type="Gene3D" id="1.10.1220.10">
    <property type="entry name" value="Met repressor-like"/>
    <property type="match status" value="1"/>
</dbReference>
<dbReference type="HAMAP" id="MF_00476">
    <property type="entry name" value="NikR"/>
    <property type="match status" value="1"/>
</dbReference>
<dbReference type="InterPro" id="IPR027271">
    <property type="entry name" value="Acetolactate_synth/TF_NikR_C"/>
</dbReference>
<dbReference type="InterPro" id="IPR045865">
    <property type="entry name" value="ACT-like_dom_sf"/>
</dbReference>
<dbReference type="InterPro" id="IPR013321">
    <property type="entry name" value="Arc_rbn_hlx_hlx"/>
</dbReference>
<dbReference type="InterPro" id="IPR002145">
    <property type="entry name" value="CopG"/>
</dbReference>
<dbReference type="InterPro" id="IPR050192">
    <property type="entry name" value="CopG/NikR_regulator"/>
</dbReference>
<dbReference type="InterPro" id="IPR022988">
    <property type="entry name" value="Ni_resp_reg_NikR"/>
</dbReference>
<dbReference type="InterPro" id="IPR010985">
    <property type="entry name" value="Ribbon_hlx_hlx"/>
</dbReference>
<dbReference type="InterPro" id="IPR014864">
    <property type="entry name" value="TF_NikR_Ni-bd_C"/>
</dbReference>
<dbReference type="NCBIfam" id="NF001884">
    <property type="entry name" value="PRK00630.1"/>
    <property type="match status" value="1"/>
</dbReference>
<dbReference type="NCBIfam" id="NF002169">
    <property type="entry name" value="PRK01002.1"/>
    <property type="match status" value="1"/>
</dbReference>
<dbReference type="NCBIfam" id="NF002815">
    <property type="entry name" value="PRK02967.1"/>
    <property type="match status" value="1"/>
</dbReference>
<dbReference type="NCBIfam" id="NF003381">
    <property type="entry name" value="PRK04460.1"/>
    <property type="match status" value="1"/>
</dbReference>
<dbReference type="PANTHER" id="PTHR34719">
    <property type="entry name" value="NICKEL-RESPONSIVE REGULATOR"/>
    <property type="match status" value="1"/>
</dbReference>
<dbReference type="PANTHER" id="PTHR34719:SF2">
    <property type="entry name" value="NICKEL-RESPONSIVE REGULATOR"/>
    <property type="match status" value="1"/>
</dbReference>
<dbReference type="Pfam" id="PF08753">
    <property type="entry name" value="NikR_C"/>
    <property type="match status" value="1"/>
</dbReference>
<dbReference type="Pfam" id="PF01402">
    <property type="entry name" value="RHH_1"/>
    <property type="match status" value="1"/>
</dbReference>
<dbReference type="SUPFAM" id="SSF55021">
    <property type="entry name" value="ACT-like"/>
    <property type="match status" value="1"/>
</dbReference>
<dbReference type="SUPFAM" id="SSF47598">
    <property type="entry name" value="Ribbon-helix-helix"/>
    <property type="match status" value="1"/>
</dbReference>
<organism>
    <name type="scientific">Nitratidesulfovibrio vulgaris (strain DP4)</name>
    <name type="common">Desulfovibrio vulgaris</name>
    <dbReference type="NCBI Taxonomy" id="391774"/>
    <lineage>
        <taxon>Bacteria</taxon>
        <taxon>Pseudomonadati</taxon>
        <taxon>Thermodesulfobacteriota</taxon>
        <taxon>Desulfovibrionia</taxon>
        <taxon>Desulfovibrionales</taxon>
        <taxon>Desulfovibrionaceae</taxon>
        <taxon>Nitratidesulfovibrio</taxon>
    </lineage>
</organism>
<reference key="1">
    <citation type="journal article" date="2009" name="Environ. Microbiol.">
        <title>Contribution of mobile genetic elements to Desulfovibrio vulgaris genome plasticity.</title>
        <authorList>
            <person name="Walker C.B."/>
            <person name="Stolyar S."/>
            <person name="Chivian D."/>
            <person name="Pinel N."/>
            <person name="Gabster J.A."/>
            <person name="Dehal P.S."/>
            <person name="He Z."/>
            <person name="Yang Z.K."/>
            <person name="Yen H.C."/>
            <person name="Zhou J."/>
            <person name="Wall J.D."/>
            <person name="Hazen T.C."/>
            <person name="Arkin A.P."/>
            <person name="Stahl D.A."/>
        </authorList>
    </citation>
    <scope>NUCLEOTIDE SEQUENCE [LARGE SCALE GENOMIC DNA]</scope>
    <source>
        <strain>DP4</strain>
    </source>
</reference>
<gene>
    <name type="ordered locus">Dvul_0474</name>
</gene>
<accession>A1VAN1</accession>
<feature type="chain" id="PRO_1000014062" description="Putative nickel-responsive regulator">
    <location>
        <begin position="1"/>
        <end position="139"/>
    </location>
</feature>
<feature type="binding site" evidence="1">
    <location>
        <position position="79"/>
    </location>
    <ligand>
        <name>Ni(2+)</name>
        <dbReference type="ChEBI" id="CHEBI:49786"/>
    </ligand>
</feature>
<feature type="binding site" evidence="1">
    <location>
        <position position="90"/>
    </location>
    <ligand>
        <name>Ni(2+)</name>
        <dbReference type="ChEBI" id="CHEBI:49786"/>
    </ligand>
</feature>
<feature type="binding site" evidence="1">
    <location>
        <position position="92"/>
    </location>
    <ligand>
        <name>Ni(2+)</name>
        <dbReference type="ChEBI" id="CHEBI:49786"/>
    </ligand>
</feature>
<feature type="binding site" evidence="1">
    <location>
        <position position="98"/>
    </location>
    <ligand>
        <name>Ni(2+)</name>
        <dbReference type="ChEBI" id="CHEBI:49786"/>
    </ligand>
</feature>